<dbReference type="EMBL" id="AE017220">
    <property type="protein sequence ID" value="AAX66679.1"/>
    <property type="molecule type" value="Genomic_DNA"/>
</dbReference>
<dbReference type="RefSeq" id="WP_001540766.1">
    <property type="nucleotide sequence ID" value="NC_006905.1"/>
</dbReference>
<dbReference type="SMR" id="Q57KT3"/>
<dbReference type="KEGG" id="sec:SCH_2773"/>
<dbReference type="HOGENOM" id="CLU_017490_0_1_6"/>
<dbReference type="UniPathway" id="UPA00638"/>
<dbReference type="Proteomes" id="UP000000538">
    <property type="component" value="Chromosome"/>
</dbReference>
<dbReference type="GO" id="GO:0005737">
    <property type="term" value="C:cytoplasm"/>
    <property type="evidence" value="ECO:0007669"/>
    <property type="project" value="UniProtKB-SubCell"/>
</dbReference>
<dbReference type="GO" id="GO:0009055">
    <property type="term" value="F:electron transfer activity"/>
    <property type="evidence" value="ECO:0007669"/>
    <property type="project" value="UniProtKB-UniRule"/>
</dbReference>
<dbReference type="GO" id="GO:0010181">
    <property type="term" value="F:FMN binding"/>
    <property type="evidence" value="ECO:0007669"/>
    <property type="project" value="InterPro"/>
</dbReference>
<dbReference type="GO" id="GO:0005506">
    <property type="term" value="F:iron ion binding"/>
    <property type="evidence" value="ECO:0007669"/>
    <property type="project" value="InterPro"/>
</dbReference>
<dbReference type="GO" id="GO:0016966">
    <property type="term" value="F:nitric oxide reductase activity"/>
    <property type="evidence" value="ECO:0007669"/>
    <property type="project" value="InterPro"/>
</dbReference>
<dbReference type="CDD" id="cd07709">
    <property type="entry name" value="flavodiiron_proteins_MBL-fold"/>
    <property type="match status" value="1"/>
</dbReference>
<dbReference type="CDD" id="cd00730">
    <property type="entry name" value="rubredoxin"/>
    <property type="match status" value="1"/>
</dbReference>
<dbReference type="FunFam" id="3.40.50.360:FF:000012">
    <property type="entry name" value="Anaerobic nitric oxide reductase flavorubredoxin"/>
    <property type="match status" value="1"/>
</dbReference>
<dbReference type="FunFam" id="3.60.15.10:FF:000009">
    <property type="entry name" value="Anaerobic nitric oxide reductase flavorubredoxin"/>
    <property type="match status" value="1"/>
</dbReference>
<dbReference type="Gene3D" id="2.20.28.10">
    <property type="match status" value="1"/>
</dbReference>
<dbReference type="Gene3D" id="3.40.50.360">
    <property type="match status" value="1"/>
</dbReference>
<dbReference type="Gene3D" id="3.60.15.10">
    <property type="entry name" value="Ribonuclease Z/Hydroxyacylglutathione hydrolase-like"/>
    <property type="match status" value="1"/>
</dbReference>
<dbReference type="HAMAP" id="MF_01312">
    <property type="entry name" value="NorV"/>
    <property type="match status" value="1"/>
</dbReference>
<dbReference type="InterPro" id="IPR023957">
    <property type="entry name" value="Anaer_NO_rdtase_flvorubredoxin"/>
</dbReference>
<dbReference type="InterPro" id="IPR008254">
    <property type="entry name" value="Flavodoxin/NO_synth"/>
</dbReference>
<dbReference type="InterPro" id="IPR029039">
    <property type="entry name" value="Flavoprotein-like_sf"/>
</dbReference>
<dbReference type="InterPro" id="IPR001279">
    <property type="entry name" value="Metallo-B-lactamas"/>
</dbReference>
<dbReference type="InterPro" id="IPR045761">
    <property type="entry name" value="ODP_dom"/>
</dbReference>
<dbReference type="InterPro" id="IPR036866">
    <property type="entry name" value="RibonucZ/Hydroxyglut_hydro"/>
</dbReference>
<dbReference type="InterPro" id="IPR024934">
    <property type="entry name" value="Rubredoxin-like_dom"/>
</dbReference>
<dbReference type="InterPro" id="IPR016440">
    <property type="entry name" value="Rubredoxin-O_OxRdtase"/>
</dbReference>
<dbReference type="InterPro" id="IPR024935">
    <property type="entry name" value="Rubredoxin_dom"/>
</dbReference>
<dbReference type="NCBIfam" id="NF003954">
    <property type="entry name" value="PRK05452.1"/>
    <property type="match status" value="1"/>
</dbReference>
<dbReference type="PANTHER" id="PTHR43717">
    <property type="entry name" value="ANAEROBIC NITRIC OXIDE REDUCTASE FLAVORUBREDOXIN"/>
    <property type="match status" value="1"/>
</dbReference>
<dbReference type="PANTHER" id="PTHR43717:SF1">
    <property type="entry name" value="ANAEROBIC NITRIC OXIDE REDUCTASE FLAVORUBREDOXIN"/>
    <property type="match status" value="1"/>
</dbReference>
<dbReference type="Pfam" id="PF00258">
    <property type="entry name" value="Flavodoxin_1"/>
    <property type="match status" value="1"/>
</dbReference>
<dbReference type="Pfam" id="PF19583">
    <property type="entry name" value="ODP"/>
    <property type="match status" value="1"/>
</dbReference>
<dbReference type="Pfam" id="PF00301">
    <property type="entry name" value="Rubredoxin"/>
    <property type="match status" value="1"/>
</dbReference>
<dbReference type="PIRSF" id="PIRSF005243">
    <property type="entry name" value="ROO"/>
    <property type="match status" value="1"/>
</dbReference>
<dbReference type="PRINTS" id="PR00163">
    <property type="entry name" value="RUBREDOXIN"/>
</dbReference>
<dbReference type="SMART" id="SM00849">
    <property type="entry name" value="Lactamase_B"/>
    <property type="match status" value="1"/>
</dbReference>
<dbReference type="SUPFAM" id="SSF52218">
    <property type="entry name" value="Flavoproteins"/>
    <property type="match status" value="1"/>
</dbReference>
<dbReference type="SUPFAM" id="SSF56281">
    <property type="entry name" value="Metallo-hydrolase/oxidoreductase"/>
    <property type="match status" value="1"/>
</dbReference>
<dbReference type="SUPFAM" id="SSF57802">
    <property type="entry name" value="Rubredoxin-like"/>
    <property type="match status" value="1"/>
</dbReference>
<dbReference type="PROSITE" id="PS50902">
    <property type="entry name" value="FLAVODOXIN_LIKE"/>
    <property type="match status" value="1"/>
</dbReference>
<dbReference type="PROSITE" id="PS50903">
    <property type="entry name" value="RUBREDOXIN_LIKE"/>
    <property type="match status" value="1"/>
</dbReference>
<organism>
    <name type="scientific">Salmonella choleraesuis (strain SC-B67)</name>
    <dbReference type="NCBI Taxonomy" id="321314"/>
    <lineage>
        <taxon>Bacteria</taxon>
        <taxon>Pseudomonadati</taxon>
        <taxon>Pseudomonadota</taxon>
        <taxon>Gammaproteobacteria</taxon>
        <taxon>Enterobacterales</taxon>
        <taxon>Enterobacteriaceae</taxon>
        <taxon>Salmonella</taxon>
    </lineage>
</organism>
<sequence length="479" mass="54163">MSILVKNNIHWVGQRDWEVRDFHGTEYKTLRGSSYNSYLIREEKNVLIDTVDHKFSREFVQNLRSEIDLADIDYIIINHAEEDHAGALTELMAQIPDTPIYCTANAIDSINGHHHHPEWNFKVVKTGDTLDIGNGKQLIFVETPMLHWPDSMMTYMTGDAVLFSNDAFGQHYCDERLFNDEVDQTELFEQCQRYYANILTPFSRLVTPKITEILGFNLPVDMIATSHGVVWRDNPTQIVELYLKWAADYQEDRITIFYDTMSNNTRMMADAIAQGINEVDPNVAVKIFNVARSDKNEILTNVFRSKGVLVGTSTMNNVMMPKIAGLVEEMTGLRFRNKRASAFGSHGWSGGAVDRLSTRLQDAGFEMSLSLKAKWRPDLDALELCRQHGRDIARQWALAPLPETTQKTAPAEEITTCVAADLGPKMQCSVCQWIYDPAQGEPLQDVAPGTPWSDVPDNFLCPECSLGKDVFDVLATEAK</sequence>
<gene>
    <name evidence="1" type="primary">norV</name>
    <name evidence="1" type="synonym">flrD</name>
    <name type="ordered locus">SCH_2773</name>
</gene>
<comment type="function">
    <text evidence="1">Anaerobic nitric oxide reductase; uses NADH to detoxify nitric oxide (NO), protecting several 4Fe-4S NO-sensitive enzymes. Has at least 2 reductase partners, only one of which (NorW, flavorubredoxin reductase) has been identified. NO probably binds to the di-iron center; electrons enter from the NorW at rubredoxin and are transferred sequentially to the FMN center and the di-iron center. Also able to function as an aerobic oxygen reductase.</text>
</comment>
<comment type="cofactor">
    <cofactor evidence="1">
        <name>Fe cation</name>
        <dbReference type="ChEBI" id="CHEBI:24875"/>
    </cofactor>
    <text evidence="1">Binds 3 Fe cations per monomer.</text>
</comment>
<comment type="cofactor">
    <cofactor evidence="1">
        <name>FMN</name>
        <dbReference type="ChEBI" id="CHEBI:58210"/>
    </cofactor>
    <text evidence="1">Binds 1 FMN per monomer.</text>
</comment>
<comment type="pathway">
    <text evidence="1">Nitrogen metabolism; nitric oxide reduction.</text>
</comment>
<comment type="subunit">
    <text evidence="1">Homotetramer.</text>
</comment>
<comment type="subcellular location">
    <subcellularLocation>
        <location evidence="1">Cytoplasm</location>
    </subcellularLocation>
</comment>
<comment type="similarity">
    <text evidence="1">In the N-terminal section; belongs to the zinc metallo-hydrolase group 3 family.</text>
</comment>
<feature type="chain" id="PRO_0000305595" description="Anaerobic nitric oxide reductase flavorubredoxin">
    <location>
        <begin position="1"/>
        <end position="479"/>
    </location>
</feature>
<feature type="domain" description="Flavodoxin-like" evidence="1">
    <location>
        <begin position="254"/>
        <end position="393"/>
    </location>
</feature>
<feature type="domain" description="Rubredoxin-like" evidence="1">
    <location>
        <begin position="423"/>
        <end position="474"/>
    </location>
</feature>
<feature type="region of interest" description="Zinc metallo-hydrolase">
    <location>
        <begin position="30"/>
        <end position="210"/>
    </location>
</feature>
<feature type="binding site" evidence="1">
    <location>
        <position position="79"/>
    </location>
    <ligand>
        <name>Fe cation</name>
        <dbReference type="ChEBI" id="CHEBI:24875"/>
        <label>1</label>
    </ligand>
</feature>
<feature type="binding site" evidence="1">
    <location>
        <position position="81"/>
    </location>
    <ligand>
        <name>Fe cation</name>
        <dbReference type="ChEBI" id="CHEBI:24875"/>
        <label>1</label>
    </ligand>
</feature>
<feature type="binding site" evidence="1">
    <location>
        <position position="83"/>
    </location>
    <ligand>
        <name>Fe cation</name>
        <dbReference type="ChEBI" id="CHEBI:24875"/>
        <label>2</label>
    </ligand>
</feature>
<feature type="binding site" evidence="1">
    <location>
        <position position="147"/>
    </location>
    <ligand>
        <name>Fe cation</name>
        <dbReference type="ChEBI" id="CHEBI:24875"/>
        <label>1</label>
    </ligand>
</feature>
<feature type="binding site" evidence="1">
    <location>
        <position position="166"/>
    </location>
    <ligand>
        <name>Fe cation</name>
        <dbReference type="ChEBI" id="CHEBI:24875"/>
        <label>1</label>
    </ligand>
</feature>
<feature type="binding site" evidence="1">
    <location>
        <position position="166"/>
    </location>
    <ligand>
        <name>Fe cation</name>
        <dbReference type="ChEBI" id="CHEBI:24875"/>
        <label>2</label>
    </ligand>
</feature>
<feature type="binding site" evidence="1">
    <location>
        <position position="227"/>
    </location>
    <ligand>
        <name>Fe cation</name>
        <dbReference type="ChEBI" id="CHEBI:24875"/>
        <label>2</label>
    </ligand>
</feature>
<feature type="binding site" evidence="1">
    <location>
        <begin position="260"/>
        <end position="264"/>
    </location>
    <ligand>
        <name>FMN</name>
        <dbReference type="ChEBI" id="CHEBI:58210"/>
    </ligand>
</feature>
<feature type="binding site" evidence="1">
    <location>
        <begin position="342"/>
        <end position="369"/>
    </location>
    <ligand>
        <name>FMN</name>
        <dbReference type="ChEBI" id="CHEBI:58210"/>
    </ligand>
</feature>
<feature type="binding site" evidence="1">
    <location>
        <position position="428"/>
    </location>
    <ligand>
        <name>Fe cation</name>
        <dbReference type="ChEBI" id="CHEBI:24875"/>
        <label>3</label>
    </ligand>
</feature>
<feature type="binding site" evidence="1">
    <location>
        <position position="431"/>
    </location>
    <ligand>
        <name>Fe cation</name>
        <dbReference type="ChEBI" id="CHEBI:24875"/>
        <label>3</label>
    </ligand>
</feature>
<feature type="binding site" evidence="1">
    <location>
        <position position="461"/>
    </location>
    <ligand>
        <name>Fe cation</name>
        <dbReference type="ChEBI" id="CHEBI:24875"/>
        <label>3</label>
    </ligand>
</feature>
<feature type="binding site" evidence="1">
    <location>
        <position position="464"/>
    </location>
    <ligand>
        <name>Fe cation</name>
        <dbReference type="ChEBI" id="CHEBI:24875"/>
        <label>3</label>
    </ligand>
</feature>
<evidence type="ECO:0000255" key="1">
    <source>
        <dbReference type="HAMAP-Rule" id="MF_01312"/>
    </source>
</evidence>
<keyword id="KW-0963">Cytoplasm</keyword>
<keyword id="KW-0249">Electron transport</keyword>
<keyword id="KW-0285">Flavoprotein</keyword>
<keyword id="KW-0288">FMN</keyword>
<keyword id="KW-0408">Iron</keyword>
<keyword id="KW-0479">Metal-binding</keyword>
<keyword id="KW-0560">Oxidoreductase</keyword>
<keyword id="KW-0813">Transport</keyword>
<accession>Q57KT3</accession>
<protein>
    <recommendedName>
        <fullName evidence="1">Anaerobic nitric oxide reductase flavorubredoxin</fullName>
        <shortName evidence="1">FlRd</shortName>
        <shortName evidence="1">FlavoRb</shortName>
    </recommendedName>
</protein>
<proteinExistence type="inferred from homology"/>
<name>NORV_SALCH</name>
<reference key="1">
    <citation type="journal article" date="2005" name="Nucleic Acids Res.">
        <title>The genome sequence of Salmonella enterica serovar Choleraesuis, a highly invasive and resistant zoonotic pathogen.</title>
        <authorList>
            <person name="Chiu C.-H."/>
            <person name="Tang P."/>
            <person name="Chu C."/>
            <person name="Hu S."/>
            <person name="Bao Q."/>
            <person name="Yu J."/>
            <person name="Chou Y.-Y."/>
            <person name="Wang H.-S."/>
            <person name="Lee Y.-S."/>
        </authorList>
    </citation>
    <scope>NUCLEOTIDE SEQUENCE [LARGE SCALE GENOMIC DNA]</scope>
    <source>
        <strain>SC-B67</strain>
    </source>
</reference>